<reference key="1">
    <citation type="journal article" date="1990" name="J. Bacteriol.">
        <title>Copper-zinc superoxide dismutase of Caulobacter crescentus: cloning, sequencing, and mapping of the gene and periplasmic location of the enzyme.</title>
        <authorList>
            <person name="Steinman H.M."/>
            <person name="Ely B."/>
        </authorList>
    </citation>
    <scope>NUCLEOTIDE SEQUENCE [GENOMIC DNA]</scope>
    <source>
        <strain>ATCC 19089 / CIP 103742 / CB 15</strain>
    </source>
</reference>
<reference key="2">
    <citation type="journal article" date="2001" name="Proc. Natl. Acad. Sci. U.S.A.">
        <title>Complete genome sequence of Caulobacter crescentus.</title>
        <authorList>
            <person name="Nierman W.C."/>
            <person name="Feldblyum T.V."/>
            <person name="Laub M.T."/>
            <person name="Paulsen I.T."/>
            <person name="Nelson K.E."/>
            <person name="Eisen J.A."/>
            <person name="Heidelberg J.F."/>
            <person name="Alley M.R.K."/>
            <person name="Ohta N."/>
            <person name="Maddock J.R."/>
            <person name="Potocka I."/>
            <person name="Nelson W.C."/>
            <person name="Newton A."/>
            <person name="Stephens C."/>
            <person name="Phadke N.D."/>
            <person name="Ely B."/>
            <person name="DeBoy R.T."/>
            <person name="Dodson R.J."/>
            <person name="Durkin A.S."/>
            <person name="Gwinn M.L."/>
            <person name="Haft D.H."/>
            <person name="Kolonay J.F."/>
            <person name="Smit J."/>
            <person name="Craven M.B."/>
            <person name="Khouri H.M."/>
            <person name="Shetty J."/>
            <person name="Berry K.J."/>
            <person name="Utterback T.R."/>
            <person name="Tran K."/>
            <person name="Wolf A.M."/>
            <person name="Vamathevan J.J."/>
            <person name="Ermolaeva M.D."/>
            <person name="White O."/>
            <person name="Salzberg S.L."/>
            <person name="Venter J.C."/>
            <person name="Shapiro L."/>
            <person name="Fraser C.M."/>
        </authorList>
    </citation>
    <scope>NUCLEOTIDE SEQUENCE [LARGE SCALE GENOMIC DNA]</scope>
    <source>
        <strain>ATCC 19089 / CIP 103742 / CB 15</strain>
    </source>
</reference>
<reference key="3">
    <citation type="journal article" date="1982" name="J. Biol. Chem.">
        <title>Copper-zinc superoxide dismutase from Caulobacter crescentus CB15. A novel bacteriocuprein form of the enzyme.</title>
        <authorList>
            <person name="Steinman H.M."/>
        </authorList>
    </citation>
    <scope>PARTIAL PROTEIN SEQUENCE</scope>
    <source>
        <strain>ATCC 19089 / CIP 103742 / CB 15</strain>
    </source>
</reference>
<gene>
    <name type="primary">sodC</name>
    <name type="ordered locus">CC_1579</name>
</gene>
<organism>
    <name type="scientific">Caulobacter vibrioides (strain ATCC 19089 / CIP 103742 / CB 15)</name>
    <name type="common">Caulobacter crescentus</name>
    <dbReference type="NCBI Taxonomy" id="190650"/>
    <lineage>
        <taxon>Bacteria</taxon>
        <taxon>Pseudomonadati</taxon>
        <taxon>Pseudomonadota</taxon>
        <taxon>Alphaproteobacteria</taxon>
        <taxon>Caulobacterales</taxon>
        <taxon>Caulobacteraceae</taxon>
        <taxon>Caulobacter</taxon>
    </lineage>
</organism>
<accession>P20379</accession>
<protein>
    <recommendedName>
        <fullName>Superoxide dismutase [Cu-Zn]</fullName>
        <ecNumber>1.15.1.1</ecNumber>
    </recommendedName>
</protein>
<name>SODC_CAUVC</name>
<proteinExistence type="evidence at protein level"/>
<dbReference type="EC" id="1.15.1.1"/>
<dbReference type="EMBL" id="M55259">
    <property type="protein sequence ID" value="AAA23054.1"/>
    <property type="molecule type" value="Genomic_DNA"/>
</dbReference>
<dbReference type="EMBL" id="AE005673">
    <property type="protein sequence ID" value="AAK23558.1"/>
    <property type="molecule type" value="Genomic_DNA"/>
</dbReference>
<dbReference type="PIR" id="A35383">
    <property type="entry name" value="A35383"/>
</dbReference>
<dbReference type="RefSeq" id="NP_420390.1">
    <property type="nucleotide sequence ID" value="NC_002696.2"/>
</dbReference>
<dbReference type="RefSeq" id="WP_010919453.1">
    <property type="nucleotide sequence ID" value="NC_002696.2"/>
</dbReference>
<dbReference type="SMR" id="P20379"/>
<dbReference type="STRING" id="190650.CC_1579"/>
<dbReference type="EnsemblBacteria" id="AAK23558">
    <property type="protein sequence ID" value="AAK23558"/>
    <property type="gene ID" value="CC_1579"/>
</dbReference>
<dbReference type="KEGG" id="ccr:CC_1579"/>
<dbReference type="PATRIC" id="fig|190650.5.peg.1607"/>
<dbReference type="eggNOG" id="COG2032">
    <property type="taxonomic scope" value="Bacteria"/>
</dbReference>
<dbReference type="HOGENOM" id="CLU_056632_8_1_5"/>
<dbReference type="BioCyc" id="CAULO:CC1579-MONOMER"/>
<dbReference type="Proteomes" id="UP000001816">
    <property type="component" value="Chromosome"/>
</dbReference>
<dbReference type="GO" id="GO:0042597">
    <property type="term" value="C:periplasmic space"/>
    <property type="evidence" value="ECO:0007669"/>
    <property type="project" value="UniProtKB-SubCell"/>
</dbReference>
<dbReference type="GO" id="GO:0005507">
    <property type="term" value="F:copper ion binding"/>
    <property type="evidence" value="ECO:0007669"/>
    <property type="project" value="InterPro"/>
</dbReference>
<dbReference type="GO" id="GO:0004784">
    <property type="term" value="F:superoxide dismutase activity"/>
    <property type="evidence" value="ECO:0007669"/>
    <property type="project" value="UniProtKB-EC"/>
</dbReference>
<dbReference type="CDD" id="cd00305">
    <property type="entry name" value="Cu-Zn_Superoxide_Dismutase"/>
    <property type="match status" value="1"/>
</dbReference>
<dbReference type="Gene3D" id="2.60.40.200">
    <property type="entry name" value="Superoxide dismutase, copper/zinc binding domain"/>
    <property type="match status" value="1"/>
</dbReference>
<dbReference type="InterPro" id="IPR036423">
    <property type="entry name" value="SOD-like_Cu/Zn_dom_sf"/>
</dbReference>
<dbReference type="InterPro" id="IPR024134">
    <property type="entry name" value="SOD_Cu/Zn_/chaperone"/>
</dbReference>
<dbReference type="InterPro" id="IPR018152">
    <property type="entry name" value="SOD_Cu/Zn_BS"/>
</dbReference>
<dbReference type="InterPro" id="IPR001424">
    <property type="entry name" value="SOD_Cu_Zn_dom"/>
</dbReference>
<dbReference type="NCBIfam" id="NF047632">
    <property type="entry name" value="SodCCaul"/>
    <property type="match status" value="1"/>
</dbReference>
<dbReference type="PANTHER" id="PTHR10003">
    <property type="entry name" value="SUPEROXIDE DISMUTASE CU-ZN -RELATED"/>
    <property type="match status" value="1"/>
</dbReference>
<dbReference type="Pfam" id="PF00080">
    <property type="entry name" value="Sod_Cu"/>
    <property type="match status" value="1"/>
</dbReference>
<dbReference type="SUPFAM" id="SSF49329">
    <property type="entry name" value="Cu,Zn superoxide dismutase-like"/>
    <property type="match status" value="1"/>
</dbReference>
<dbReference type="PROSITE" id="PS00087">
    <property type="entry name" value="SOD_CU_ZN_1"/>
    <property type="match status" value="1"/>
</dbReference>
<dbReference type="PROSITE" id="PS00332">
    <property type="entry name" value="SOD_CU_ZN_2"/>
    <property type="match status" value="1"/>
</dbReference>
<keyword id="KW-0049">Antioxidant</keyword>
<keyword id="KW-0186">Copper</keyword>
<keyword id="KW-0903">Direct protein sequencing</keyword>
<keyword id="KW-1015">Disulfide bond</keyword>
<keyword id="KW-0479">Metal-binding</keyword>
<keyword id="KW-0560">Oxidoreductase</keyword>
<keyword id="KW-0574">Periplasm</keyword>
<keyword id="KW-1185">Reference proteome</keyword>
<keyword id="KW-0732">Signal</keyword>
<keyword id="KW-0862">Zinc</keyword>
<sequence>MIRLSAAAALGLAAALAASPALAQTSATAVVKAGDGKDAGAVTVTEAPHGVLLKLELKGLTPGWHAAHFHEKGDCGTPDFKSAGAHVHTAATTVHGLLNPDANDSGDLPNIFAAADGAATAEIYSPLVSLKGAGGRPALLDADGSSIVVHANPDDHKTQPIGGAGARVACGVIK</sequence>
<evidence type="ECO:0000250" key="1"/>
<evidence type="ECO:0000305" key="2"/>
<feature type="signal peptide">
    <location>
        <begin position="1"/>
        <end position="23"/>
    </location>
</feature>
<feature type="chain" id="PRO_0000032823" description="Superoxide dismutase [Cu-Zn]">
    <location>
        <begin position="24"/>
        <end position="174"/>
    </location>
</feature>
<feature type="binding site" evidence="1">
    <location>
        <position position="68"/>
    </location>
    <ligand>
        <name>Cu cation</name>
        <dbReference type="ChEBI" id="CHEBI:23378"/>
        <note>catalytic</note>
    </ligand>
</feature>
<feature type="binding site" evidence="1">
    <location>
        <position position="70"/>
    </location>
    <ligand>
        <name>Cu cation</name>
        <dbReference type="ChEBI" id="CHEBI:23378"/>
        <note>catalytic</note>
    </ligand>
</feature>
<feature type="binding site" evidence="1">
    <location>
        <position position="86"/>
    </location>
    <ligand>
        <name>Cu cation</name>
        <dbReference type="ChEBI" id="CHEBI:23378"/>
        <note>catalytic</note>
    </ligand>
</feature>
<feature type="binding site" evidence="1">
    <location>
        <position position="86"/>
    </location>
    <ligand>
        <name>Zn(2+)</name>
        <dbReference type="ChEBI" id="CHEBI:29105"/>
        <note>structural</note>
    </ligand>
</feature>
<feature type="binding site" evidence="1">
    <location>
        <position position="95"/>
    </location>
    <ligand>
        <name>Zn(2+)</name>
        <dbReference type="ChEBI" id="CHEBI:29105"/>
        <note>structural</note>
    </ligand>
</feature>
<feature type="binding site" evidence="1">
    <location>
        <position position="104"/>
    </location>
    <ligand>
        <name>Zn(2+)</name>
        <dbReference type="ChEBI" id="CHEBI:29105"/>
        <note>structural</note>
    </ligand>
</feature>
<feature type="binding site" evidence="1">
    <location>
        <position position="107"/>
    </location>
    <ligand>
        <name>Zn(2+)</name>
        <dbReference type="ChEBI" id="CHEBI:29105"/>
        <note>structural</note>
    </ligand>
</feature>
<feature type="binding site" evidence="1">
    <location>
        <position position="150"/>
    </location>
    <ligand>
        <name>Cu cation</name>
        <dbReference type="ChEBI" id="CHEBI:23378"/>
        <note>catalytic</note>
    </ligand>
</feature>
<feature type="disulfide bond" evidence="1">
    <location>
        <begin position="75"/>
        <end position="170"/>
    </location>
</feature>
<comment type="function">
    <text evidence="1">Destroys radicals which are normally produced within the cells and which are toxic to biological systems (By similarity). May function against extracytoplasmic toxic oxygen species.</text>
</comment>
<comment type="catalytic activity">
    <reaction>
        <text>2 superoxide + 2 H(+) = H2O2 + O2</text>
        <dbReference type="Rhea" id="RHEA:20696"/>
        <dbReference type="ChEBI" id="CHEBI:15378"/>
        <dbReference type="ChEBI" id="CHEBI:15379"/>
        <dbReference type="ChEBI" id="CHEBI:16240"/>
        <dbReference type="ChEBI" id="CHEBI:18421"/>
        <dbReference type="EC" id="1.15.1.1"/>
    </reaction>
</comment>
<comment type="cofactor">
    <cofactor evidence="1">
        <name>Cu cation</name>
        <dbReference type="ChEBI" id="CHEBI:23378"/>
    </cofactor>
    <text evidence="1">Binds 1 copper ion per subunit.</text>
</comment>
<comment type="cofactor">
    <cofactor evidence="1">
        <name>Zn(2+)</name>
        <dbReference type="ChEBI" id="CHEBI:29105"/>
    </cofactor>
    <text evidence="1">Binds 1 zinc ion per subunit.</text>
</comment>
<comment type="subunit">
    <text>Homodimer.</text>
</comment>
<comment type="subcellular location">
    <subcellularLocation>
        <location>Periplasm</location>
    </subcellularLocation>
</comment>
<comment type="similarity">
    <text evidence="2">Belongs to the Cu-Zn superoxide dismutase family.</text>
</comment>